<organism>
    <name type="scientific">Escherichia coli (strain K12)</name>
    <dbReference type="NCBI Taxonomy" id="83333"/>
    <lineage>
        <taxon>Bacteria</taxon>
        <taxon>Pseudomonadati</taxon>
        <taxon>Pseudomonadota</taxon>
        <taxon>Gammaproteobacteria</taxon>
        <taxon>Enterobacterales</taxon>
        <taxon>Enterobacteriaceae</taxon>
        <taxon>Escherichia</taxon>
    </lineage>
</organism>
<reference key="1">
    <citation type="journal article" date="1983" name="Cell">
        <title>Sensory transducers of E. coli are composed of discrete structural and functional domains.</title>
        <authorList>
            <person name="Krikos A."/>
            <person name="Mutoh N."/>
            <person name="Boyd A."/>
            <person name="Simon M.I."/>
        </authorList>
    </citation>
    <scope>NUCLEOTIDE SEQUENCE [GENOMIC DNA]</scope>
</reference>
<reference key="2">
    <citation type="journal article" date="1996" name="DNA Res.">
        <title>A 460-kb DNA sequence of the Escherichia coli K-12 genome corresponding to the 40.1-50.0 min region on the linkage map.</title>
        <authorList>
            <person name="Itoh T."/>
            <person name="Aiba H."/>
            <person name="Baba T."/>
            <person name="Fujita K."/>
            <person name="Hayashi K."/>
            <person name="Inada T."/>
            <person name="Isono K."/>
            <person name="Kasai H."/>
            <person name="Kimura S."/>
            <person name="Kitakawa M."/>
            <person name="Kitagawa M."/>
            <person name="Makino K."/>
            <person name="Miki T."/>
            <person name="Mizobuchi K."/>
            <person name="Mori H."/>
            <person name="Mori T."/>
            <person name="Motomura K."/>
            <person name="Nakade S."/>
            <person name="Nakamura Y."/>
            <person name="Nashimoto H."/>
            <person name="Nishio Y."/>
            <person name="Oshima T."/>
            <person name="Saito N."/>
            <person name="Sampei G."/>
            <person name="Seki Y."/>
            <person name="Sivasundaram S."/>
            <person name="Tagami H."/>
            <person name="Takeda J."/>
            <person name="Takemoto K."/>
            <person name="Wada C."/>
            <person name="Yamamoto Y."/>
            <person name="Horiuchi T."/>
        </authorList>
    </citation>
    <scope>NUCLEOTIDE SEQUENCE [LARGE SCALE GENOMIC DNA]</scope>
    <source>
        <strain>K12 / W3110 / ATCC 27325 / DSM 5911</strain>
    </source>
</reference>
<reference key="3">
    <citation type="journal article" date="1997" name="Science">
        <title>The complete genome sequence of Escherichia coli K-12.</title>
        <authorList>
            <person name="Blattner F.R."/>
            <person name="Plunkett G. III"/>
            <person name="Bloch C.A."/>
            <person name="Perna N.T."/>
            <person name="Burland V."/>
            <person name="Riley M."/>
            <person name="Collado-Vides J."/>
            <person name="Glasner J.D."/>
            <person name="Rode C.K."/>
            <person name="Mayhew G.F."/>
            <person name="Gregor J."/>
            <person name="Davis N.W."/>
            <person name="Kirkpatrick H.A."/>
            <person name="Goeden M.A."/>
            <person name="Rose D.J."/>
            <person name="Mau B."/>
            <person name="Shao Y."/>
        </authorList>
    </citation>
    <scope>NUCLEOTIDE SEQUENCE [LARGE SCALE GENOMIC DNA]</scope>
    <source>
        <strain>K12 / MG1655 / ATCC 47076</strain>
    </source>
</reference>
<reference key="4">
    <citation type="journal article" date="2006" name="Mol. Syst. Biol.">
        <title>Highly accurate genome sequences of Escherichia coli K-12 strains MG1655 and W3110.</title>
        <authorList>
            <person name="Hayashi K."/>
            <person name="Morooka N."/>
            <person name="Yamamoto Y."/>
            <person name="Fujita K."/>
            <person name="Isono K."/>
            <person name="Choi S."/>
            <person name="Ohtsubo E."/>
            <person name="Baba T."/>
            <person name="Wanner B.L."/>
            <person name="Mori H."/>
            <person name="Horiuchi T."/>
        </authorList>
    </citation>
    <scope>NUCLEOTIDE SEQUENCE [LARGE SCALE GENOMIC DNA]</scope>
    <source>
        <strain>K12 / W3110 / ATCC 27325 / DSM 5911</strain>
    </source>
</reference>
<reference key="5">
    <citation type="journal article" date="2005" name="Science">
        <title>Global topology analysis of the Escherichia coli inner membrane proteome.</title>
        <authorList>
            <person name="Daley D.O."/>
            <person name="Rapp M."/>
            <person name="Granseth E."/>
            <person name="Melen K."/>
            <person name="Drew D."/>
            <person name="von Heijne G."/>
        </authorList>
    </citation>
    <scope>TOPOLOGY [LARGE SCALE ANALYSIS]</scope>
    <source>
        <strain>K12 / MG1655 / ATCC 47076</strain>
    </source>
</reference>
<reference key="6">
    <citation type="journal article" date="2012" name="Mol. Microbiol.">
        <title>Isolation and identification of new inner membrane-associated proteins that localize to cell poles in Escherichia coli.</title>
        <authorList>
            <person name="Li G."/>
            <person name="Young K.D."/>
        </authorList>
    </citation>
    <scope>SUBCELLULAR LOCATION</scope>
    <source>
        <strain>K12 / MG1655 / ATCC 47076</strain>
    </source>
</reference>
<name>MCP4_ECOLI</name>
<proteinExistence type="evidence at protein level"/>
<evidence type="ECO:0000250" key="1">
    <source>
        <dbReference type="UniProtKB" id="P05704"/>
    </source>
</evidence>
<evidence type="ECO:0000250" key="2">
    <source>
        <dbReference type="UniProtKB" id="P07017"/>
    </source>
</evidence>
<evidence type="ECO:0000255" key="3"/>
<evidence type="ECO:0000255" key="4">
    <source>
        <dbReference type="PROSITE-ProRule" id="PRU00102"/>
    </source>
</evidence>
<evidence type="ECO:0000255" key="5">
    <source>
        <dbReference type="PROSITE-ProRule" id="PRU00284"/>
    </source>
</evidence>
<evidence type="ECO:0000269" key="6">
    <source>
    </source>
</evidence>
<evidence type="ECO:0000305" key="7"/>
<feature type="chain" id="PRO_0000110541" description="Methyl-accepting chemotaxis protein IV">
    <location>
        <begin position="1"/>
        <end position="533"/>
    </location>
</feature>
<feature type="topological domain" description="Cytoplasmic" evidence="3">
    <location>
        <begin position="1"/>
        <end position="6"/>
    </location>
</feature>
<feature type="transmembrane region" description="Helical" evidence="3">
    <location>
        <begin position="7"/>
        <end position="33"/>
    </location>
</feature>
<feature type="topological domain" description="Periplasmic" evidence="3">
    <location>
        <begin position="34"/>
        <end position="188"/>
    </location>
</feature>
<feature type="transmembrane region" description="Helical" evidence="3">
    <location>
        <begin position="189"/>
        <end position="209"/>
    </location>
</feature>
<feature type="topological domain" description="Cytoplasmic" evidence="3">
    <location>
        <begin position="210"/>
        <end position="533"/>
    </location>
</feature>
<feature type="domain" description="HAMP" evidence="4">
    <location>
        <begin position="212"/>
        <end position="264"/>
    </location>
</feature>
<feature type="domain" description="Methyl-accepting transducer" evidence="5">
    <location>
        <begin position="269"/>
        <end position="498"/>
    </location>
</feature>
<feature type="modified residue" description="Glutamate methyl ester (Gln)" evidence="2">
    <location>
        <position position="293"/>
    </location>
</feature>
<feature type="modified residue" description="Glutamate methyl ester (Gln)" evidence="1">
    <location>
        <position position="300"/>
    </location>
</feature>
<feature type="modified residue" description="Glutamate methyl ester (Gln)" evidence="1">
    <location>
        <position position="307"/>
    </location>
</feature>
<feature type="modified residue" description="Glutamate methyl ester (Glu)" evidence="1">
    <location>
        <position position="489"/>
    </location>
</feature>
<feature type="sequence conflict" description="In Ref. 1; AAA23567." evidence="7" ref="1">
    <original>A</original>
    <variation>G</variation>
    <location>
        <position position="335"/>
    </location>
</feature>
<feature type="sequence conflict" description="In Ref. 1; AAA23567." evidence="7" ref="1">
    <original>H</original>
    <variation>R</variation>
    <location>
        <position position="503"/>
    </location>
</feature>
<feature type="sequence conflict" description="In Ref. 1; AAA23567." evidence="7" ref="1">
    <original>QIAPVVS</original>
    <variation>TNCASGILK</variation>
    <location>
        <begin position="527"/>
        <end position="533"/>
    </location>
</feature>
<comment type="function">
    <text>Mediates taxis toward dipeptides via an interaction with the periplasmic dipeptide-binding protein.</text>
</comment>
<comment type="function">
    <text>Chemotactic-signal transducers respond to changes in the concentration of attractants and repellents in the environment, transduce a signal from the outside to the inside of the cell, and facilitate sensory adaptation through the variation of the level of methylation. Attractants increase the level of methylation while repellents decrease the level of methylation, the methyl groups are added by the methyltransferase CheR and removed by the methylesterase CheB.</text>
</comment>
<comment type="subcellular location">
    <subcellularLocation>
        <location evidence="6">Cell inner membrane</location>
        <topology evidence="6">Multi-pass membrane protein</topology>
    </subcellularLocation>
    <text>Found predominantly at cell poles.</text>
</comment>
<comment type="similarity">
    <text evidence="7">Belongs to the methyl-accepting chemotaxis (MCP) protein family.</text>
</comment>
<accession>P07018</accession>
<accession>P76300</accession>
<keyword id="KW-0997">Cell inner membrane</keyword>
<keyword id="KW-1003">Cell membrane</keyword>
<keyword id="KW-0145">Chemotaxis</keyword>
<keyword id="KW-0472">Membrane</keyword>
<keyword id="KW-0488">Methylation</keyword>
<keyword id="KW-1185">Reference proteome</keyword>
<keyword id="KW-0807">Transducer</keyword>
<keyword id="KW-0812">Transmembrane</keyword>
<keyword id="KW-1133">Transmembrane helix</keyword>
<gene>
    <name type="primary">tap</name>
    <name type="ordered locus">b1885</name>
    <name type="ordered locus">JW1874</name>
</gene>
<sequence length="533" mass="57512">MFNRIRISTTLFLILILCGILQIGSNGMSFWAFRDDLQRLNQVEQSNQQRAALAQTRAVMLQASTALNKAGTLTALSYPADDIKTLMTTARASLTQSTTLFKSFMAMTAGNEHVRGLQKETEKSFARWHNDLEHQATWLESNQLSDFLTAPVQGSQNAFDVNFEAWQLEINHVLEAASAQSQRNYQISALVFISMIIVAAIYISSALWWTRKMIVQPLAIIGSHFDSIAAGNLARPIAVYGRNEITAIFASLKTMQQALRGTVSDVRKGSQEMHIGIAEIVAGNNDLSSRTEQQAASLAQTAASMEQLTATVGQNADNARQASELAKNAATTAQAGGVQVSTMTHTMQEIATSSQKIGDIISVIDGIAFQTNILALNAAVEAARAGEQGRGFAVVAGEVRNLASRSAQAAKEIKGLIEESVNRVQQGSKLVNNAAATMIDIVSSVTRVNDIMGEIASASEEQQRGIEQVAQAVSQMDQVTQQNASLVEEAAVATEQLANQADHLSSRVAVFTLEEHEVARHESVQLQIAPVVS</sequence>
<dbReference type="EMBL" id="AH000879">
    <property type="protein sequence ID" value="AAA23567.1"/>
    <property type="molecule type" value="Genomic_DNA"/>
</dbReference>
<dbReference type="EMBL" id="U00096">
    <property type="protein sequence ID" value="AAC74955.1"/>
    <property type="molecule type" value="Genomic_DNA"/>
</dbReference>
<dbReference type="EMBL" id="AP009048">
    <property type="protein sequence ID" value="BAA15701.1"/>
    <property type="molecule type" value="Genomic_DNA"/>
</dbReference>
<dbReference type="PIR" id="E64951">
    <property type="entry name" value="QRECM2"/>
</dbReference>
<dbReference type="RefSeq" id="NP_416399.1">
    <property type="nucleotide sequence ID" value="NC_000913.3"/>
</dbReference>
<dbReference type="RefSeq" id="WP_000483239.1">
    <property type="nucleotide sequence ID" value="NZ_LN832404.1"/>
</dbReference>
<dbReference type="SMR" id="P07018"/>
<dbReference type="BioGRID" id="4262072">
    <property type="interactions" value="173"/>
</dbReference>
<dbReference type="DIP" id="DIP-10955N"/>
<dbReference type="FunCoup" id="P07018">
    <property type="interactions" value="278"/>
</dbReference>
<dbReference type="IntAct" id="P07018">
    <property type="interactions" value="2"/>
</dbReference>
<dbReference type="STRING" id="511145.b1885"/>
<dbReference type="PaxDb" id="511145-b1885"/>
<dbReference type="EnsemblBacteria" id="AAC74955">
    <property type="protein sequence ID" value="AAC74955"/>
    <property type="gene ID" value="b1885"/>
</dbReference>
<dbReference type="GeneID" id="946397"/>
<dbReference type="KEGG" id="ecj:JW1874"/>
<dbReference type="KEGG" id="eco:b1885"/>
<dbReference type="KEGG" id="ecoc:C3026_10720"/>
<dbReference type="PATRIC" id="fig|1411691.4.peg.362"/>
<dbReference type="EchoBASE" id="EB0980"/>
<dbReference type="eggNOG" id="COG0840">
    <property type="taxonomic scope" value="Bacteria"/>
</dbReference>
<dbReference type="HOGENOM" id="CLU_000445_107_16_6"/>
<dbReference type="InParanoid" id="P07018"/>
<dbReference type="OMA" id="QATWLEN"/>
<dbReference type="OrthoDB" id="9765776at2"/>
<dbReference type="PhylomeDB" id="P07018"/>
<dbReference type="BioCyc" id="EcoCyc:TAP-MONOMER"/>
<dbReference type="PRO" id="PR:P07018"/>
<dbReference type="Proteomes" id="UP000000625">
    <property type="component" value="Chromosome"/>
</dbReference>
<dbReference type="GO" id="GO:0005886">
    <property type="term" value="C:plasma membrane"/>
    <property type="evidence" value="ECO:0000314"/>
    <property type="project" value="EcoCyc"/>
</dbReference>
<dbReference type="GO" id="GO:0004888">
    <property type="term" value="F:transmembrane signaling receptor activity"/>
    <property type="evidence" value="ECO:0000315"/>
    <property type="project" value="EcoCyc"/>
</dbReference>
<dbReference type="GO" id="GO:0006935">
    <property type="term" value="P:chemotaxis"/>
    <property type="evidence" value="ECO:0000315"/>
    <property type="project" value="EcoCyc"/>
</dbReference>
<dbReference type="GO" id="GO:0007165">
    <property type="term" value="P:signal transduction"/>
    <property type="evidence" value="ECO:0007669"/>
    <property type="project" value="UniProtKB-KW"/>
</dbReference>
<dbReference type="CDD" id="cd06225">
    <property type="entry name" value="HAMP"/>
    <property type="match status" value="1"/>
</dbReference>
<dbReference type="CDD" id="cd11386">
    <property type="entry name" value="MCP_signal"/>
    <property type="match status" value="1"/>
</dbReference>
<dbReference type="CDD" id="cd19407">
    <property type="entry name" value="Tar_Tsr_sensor"/>
    <property type="match status" value="1"/>
</dbReference>
<dbReference type="FunFam" id="1.10.287.950:FF:000001">
    <property type="entry name" value="Methyl-accepting chemotaxis sensory transducer"/>
    <property type="match status" value="1"/>
</dbReference>
<dbReference type="Gene3D" id="1.20.120.30">
    <property type="entry name" value="Aspartate receptor, ligand-binding domain"/>
    <property type="match status" value="1"/>
</dbReference>
<dbReference type="Gene3D" id="1.10.287.950">
    <property type="entry name" value="Methyl-accepting chemotaxis protein"/>
    <property type="match status" value="1"/>
</dbReference>
<dbReference type="InterPro" id="IPR035440">
    <property type="entry name" value="4HB_MCP_dom_sf"/>
</dbReference>
<dbReference type="InterPro" id="IPR004090">
    <property type="entry name" value="Chemotax_Me-accpt_rcpt"/>
</dbReference>
<dbReference type="InterPro" id="IPR004091">
    <property type="entry name" value="Chemotax_Me-accpt_rcpt_Me-site"/>
</dbReference>
<dbReference type="InterPro" id="IPR003660">
    <property type="entry name" value="HAMP_dom"/>
</dbReference>
<dbReference type="InterPro" id="IPR051310">
    <property type="entry name" value="MCP_chemotaxis"/>
</dbReference>
<dbReference type="InterPro" id="IPR004089">
    <property type="entry name" value="MCPsignal_dom"/>
</dbReference>
<dbReference type="InterPro" id="IPR003122">
    <property type="entry name" value="Tar_rcpt_lig-bd"/>
</dbReference>
<dbReference type="NCBIfam" id="NF007309">
    <property type="entry name" value="PRK09793.1"/>
    <property type="match status" value="1"/>
</dbReference>
<dbReference type="PANTHER" id="PTHR43531:SF14">
    <property type="entry name" value="METHYL-ACCEPTING CHEMOTAXIS PROTEIN I-RELATED"/>
    <property type="match status" value="1"/>
</dbReference>
<dbReference type="PANTHER" id="PTHR43531">
    <property type="entry name" value="PROTEIN ICFG"/>
    <property type="match status" value="1"/>
</dbReference>
<dbReference type="Pfam" id="PF00672">
    <property type="entry name" value="HAMP"/>
    <property type="match status" value="1"/>
</dbReference>
<dbReference type="Pfam" id="PF00015">
    <property type="entry name" value="MCPsignal"/>
    <property type="match status" value="1"/>
</dbReference>
<dbReference type="Pfam" id="PF02203">
    <property type="entry name" value="TarH"/>
    <property type="match status" value="1"/>
</dbReference>
<dbReference type="PRINTS" id="PR00260">
    <property type="entry name" value="CHEMTRNSDUCR"/>
</dbReference>
<dbReference type="SMART" id="SM00304">
    <property type="entry name" value="HAMP"/>
    <property type="match status" value="1"/>
</dbReference>
<dbReference type="SMART" id="SM00283">
    <property type="entry name" value="MA"/>
    <property type="match status" value="1"/>
</dbReference>
<dbReference type="SMART" id="SM00319">
    <property type="entry name" value="TarH"/>
    <property type="match status" value="1"/>
</dbReference>
<dbReference type="SUPFAM" id="SSF47170">
    <property type="entry name" value="Aspartate receptor, ligand-binding domain"/>
    <property type="match status" value="1"/>
</dbReference>
<dbReference type="SUPFAM" id="SSF58104">
    <property type="entry name" value="Methyl-accepting chemotaxis protein (MCP) signaling domain"/>
    <property type="match status" value="1"/>
</dbReference>
<dbReference type="PROSITE" id="PS00538">
    <property type="entry name" value="CHEMOTAXIS_TRANSDUC_1"/>
    <property type="match status" value="1"/>
</dbReference>
<dbReference type="PROSITE" id="PS50111">
    <property type="entry name" value="CHEMOTAXIS_TRANSDUC_2"/>
    <property type="match status" value="1"/>
</dbReference>
<dbReference type="PROSITE" id="PS50885">
    <property type="entry name" value="HAMP"/>
    <property type="match status" value="1"/>
</dbReference>
<protein>
    <recommendedName>
        <fullName>Methyl-accepting chemotaxis protein IV</fullName>
        <shortName>MCP-IV</shortName>
    </recommendedName>
    <alternativeName>
        <fullName>Dipeptide chemoreceptor protein</fullName>
    </alternativeName>
</protein>